<accession>Q08430</accession>
<evidence type="ECO:0000255" key="1"/>
<evidence type="ECO:0000255" key="2">
    <source>
        <dbReference type="PROSITE-ProRule" id="PRU00107"/>
    </source>
</evidence>
<evidence type="ECO:0000305" key="3"/>
<keyword id="KW-0067">ATP-binding</keyword>
<keyword id="KW-1003">Cell membrane</keyword>
<keyword id="KW-0418">Kinase</keyword>
<keyword id="KW-0472">Membrane</keyword>
<keyword id="KW-0547">Nucleotide-binding</keyword>
<keyword id="KW-0597">Phosphoprotein</keyword>
<keyword id="KW-1185">Reference proteome</keyword>
<keyword id="KW-0749">Sporulation</keyword>
<keyword id="KW-0808">Transferase</keyword>
<keyword id="KW-0812">Transmembrane</keyword>
<keyword id="KW-1133">Transmembrane helix</keyword>
<keyword id="KW-0902">Two-component regulatory system</keyword>
<gene>
    <name type="primary">kinB</name>
    <name type="ordered locus">BSU31450</name>
</gene>
<protein>
    <recommendedName>
        <fullName>Sporulation kinase B</fullName>
        <ecNumber>2.7.13.3</ecNumber>
    </recommendedName>
</protein>
<organism>
    <name type="scientific">Bacillus subtilis (strain 168)</name>
    <dbReference type="NCBI Taxonomy" id="224308"/>
    <lineage>
        <taxon>Bacteria</taxon>
        <taxon>Bacillati</taxon>
        <taxon>Bacillota</taxon>
        <taxon>Bacilli</taxon>
        <taxon>Bacillales</taxon>
        <taxon>Bacillaceae</taxon>
        <taxon>Bacillus</taxon>
    </lineage>
</organism>
<name>KINB_BACSU</name>
<comment type="function">
    <text>Phosphorylates the sporulation-regulatory proteins spo0A and spo0F. Spo0F is required for the KinB activity.</text>
</comment>
<comment type="catalytic activity">
    <reaction>
        <text>ATP + protein L-histidine = ADP + protein N-phospho-L-histidine.</text>
        <dbReference type="EC" id="2.7.13.3"/>
    </reaction>
</comment>
<comment type="subcellular location">
    <subcellularLocation>
        <location>Cell membrane</location>
        <topology>Multi-pass membrane protein</topology>
    </subcellularLocation>
</comment>
<proteinExistence type="inferred from homology"/>
<sequence length="428" mass="47812">MEILKDYLLHICFILFPILLYQVFWLGKPAILVPKINSGLVTLFACGASVLCIIFPIHEMDYIQYGLQMIPVIICLFYISTASGLTVAASVLCFELLFYEPSAMFVFTLLPFLIIIPILFQKKWPFMSKAKKLLLSLLISCVEIFLFFASSWILSALNILNFQKSGIFVYEAAVSGLFRSSVLLLSIYIIESIAENIALRSQLIHSEKMTIVSELAASVAHEVRNPLTVVRGFVQLLFNDETLQNKSSADYKKLVLSELDRAQGIITNYLDMAKQQLYEKEVFDLSALIKETSSLMVSYANYKSVTVEAETEPDLLIYGDATKLKQAVINLMKNSIEAVPHGKGMIHISAKRNGHTIMINITDNGVGMTDHQMQKLGEPYYSLKTNGTGLGLTVTFSIIEHHHGTISFNSSFQKGTTVTIKLPADLPH</sequence>
<feature type="chain" id="PRO_0000074777" description="Sporulation kinase B">
    <location>
        <begin position="1"/>
        <end position="428"/>
    </location>
</feature>
<feature type="topological domain" description="Cytoplasmic" evidence="1">
    <location>
        <begin position="1"/>
        <end position="6"/>
    </location>
</feature>
<feature type="transmembrane region" description="Helical" evidence="1">
    <location>
        <begin position="7"/>
        <end position="27"/>
    </location>
</feature>
<feature type="topological domain" description="Extracellular" evidence="1">
    <location>
        <begin position="28"/>
        <end position="37"/>
    </location>
</feature>
<feature type="transmembrane region" description="Helical" evidence="1">
    <location>
        <begin position="38"/>
        <end position="58"/>
    </location>
</feature>
<feature type="topological domain" description="Cytoplasmic" evidence="1">
    <location>
        <begin position="59"/>
        <end position="68"/>
    </location>
</feature>
<feature type="transmembrane region" description="Helical" evidence="1">
    <location>
        <begin position="69"/>
        <end position="89"/>
    </location>
</feature>
<feature type="topological domain" description="Extracellular" evidence="1">
    <location>
        <begin position="90"/>
        <end position="99"/>
    </location>
</feature>
<feature type="transmembrane region" description="Helical" evidence="1">
    <location>
        <begin position="100"/>
        <end position="120"/>
    </location>
</feature>
<feature type="topological domain" description="Cytoplasmic" evidence="1">
    <location>
        <begin position="121"/>
        <end position="132"/>
    </location>
</feature>
<feature type="transmembrane region" description="Helical" evidence="1">
    <location>
        <begin position="133"/>
        <end position="153"/>
    </location>
</feature>
<feature type="topological domain" description="Extracellular" evidence="1">
    <location>
        <begin position="154"/>
        <end position="166"/>
    </location>
</feature>
<feature type="transmembrane region" description="Helical" evidence="1">
    <location>
        <begin position="167"/>
        <end position="187"/>
    </location>
</feature>
<feature type="topological domain" description="Cytoplasmic" evidence="1">
    <location>
        <begin position="188"/>
        <end position="428"/>
    </location>
</feature>
<feature type="domain" description="Histidine kinase" evidence="2">
    <location>
        <begin position="218"/>
        <end position="426"/>
    </location>
</feature>
<feature type="modified residue" description="Phosphohistidine; by autocatalysis" evidence="2">
    <location>
        <position position="221"/>
    </location>
</feature>
<feature type="sequence conflict" description="In Ref. 3; CAB07911." evidence="3" ref="3">
    <original>FACGA</original>
    <variation>SSPAAP</variation>
    <location>
        <begin position="44"/>
        <end position="48"/>
    </location>
</feature>
<reference key="1">
    <citation type="journal article" date="1993" name="Mol. Microbiol.">
        <title>Multisensory activation of the phosphorelay initiating sporulation in Bacillus subtilis: identification and sequence of the protein kinase of the alternate pathway.</title>
        <authorList>
            <person name="Trach K.A."/>
            <person name="Hoch J.A."/>
        </authorList>
    </citation>
    <scope>NUCLEOTIDE SEQUENCE [GENOMIC DNA]</scope>
    <source>
        <strain>168</strain>
    </source>
</reference>
<reference key="2">
    <citation type="submission" date="1995-08" db="EMBL/GenBank/DDBJ databases">
        <authorList>
            <person name="Dartois V.A."/>
            <person name="Djavakhishvili T."/>
            <person name="Hoch J.A."/>
        </authorList>
    </citation>
    <scope>SEQUENCE REVISION</scope>
</reference>
<reference key="3">
    <citation type="journal article" date="1997" name="Microbiology">
        <title>Analysis of the Bacillus subtilis genome: cloning and nucleotide sequence of a 62 kb region between 275 degrees (rrnB) and 284 degrees (pai).</title>
        <authorList>
            <person name="Oudega B."/>
            <person name="Koningstein G."/>
            <person name="Rodrigues L."/>
            <person name="de Sales Ramon M."/>
            <person name="Hilbert H."/>
            <person name="Duesterhoeft A."/>
            <person name="Pohl T.M."/>
            <person name="Weitzenegger T."/>
        </authorList>
    </citation>
    <scope>NUCLEOTIDE SEQUENCE [GENOMIC DNA]</scope>
    <source>
        <strain>168</strain>
    </source>
</reference>
<reference key="4">
    <citation type="journal article" date="1997" name="Nature">
        <title>The complete genome sequence of the Gram-positive bacterium Bacillus subtilis.</title>
        <authorList>
            <person name="Kunst F."/>
            <person name="Ogasawara N."/>
            <person name="Moszer I."/>
            <person name="Albertini A.M."/>
            <person name="Alloni G."/>
            <person name="Azevedo V."/>
            <person name="Bertero M.G."/>
            <person name="Bessieres P."/>
            <person name="Bolotin A."/>
            <person name="Borchert S."/>
            <person name="Borriss R."/>
            <person name="Boursier L."/>
            <person name="Brans A."/>
            <person name="Braun M."/>
            <person name="Brignell S.C."/>
            <person name="Bron S."/>
            <person name="Brouillet S."/>
            <person name="Bruschi C.V."/>
            <person name="Caldwell B."/>
            <person name="Capuano V."/>
            <person name="Carter N.M."/>
            <person name="Choi S.-K."/>
            <person name="Codani J.-J."/>
            <person name="Connerton I.F."/>
            <person name="Cummings N.J."/>
            <person name="Daniel R.A."/>
            <person name="Denizot F."/>
            <person name="Devine K.M."/>
            <person name="Duesterhoeft A."/>
            <person name="Ehrlich S.D."/>
            <person name="Emmerson P.T."/>
            <person name="Entian K.-D."/>
            <person name="Errington J."/>
            <person name="Fabret C."/>
            <person name="Ferrari E."/>
            <person name="Foulger D."/>
            <person name="Fritz C."/>
            <person name="Fujita M."/>
            <person name="Fujita Y."/>
            <person name="Fuma S."/>
            <person name="Galizzi A."/>
            <person name="Galleron N."/>
            <person name="Ghim S.-Y."/>
            <person name="Glaser P."/>
            <person name="Goffeau A."/>
            <person name="Golightly E.J."/>
            <person name="Grandi G."/>
            <person name="Guiseppi G."/>
            <person name="Guy B.J."/>
            <person name="Haga K."/>
            <person name="Haiech J."/>
            <person name="Harwood C.R."/>
            <person name="Henaut A."/>
            <person name="Hilbert H."/>
            <person name="Holsappel S."/>
            <person name="Hosono S."/>
            <person name="Hullo M.-F."/>
            <person name="Itaya M."/>
            <person name="Jones L.-M."/>
            <person name="Joris B."/>
            <person name="Karamata D."/>
            <person name="Kasahara Y."/>
            <person name="Klaerr-Blanchard M."/>
            <person name="Klein C."/>
            <person name="Kobayashi Y."/>
            <person name="Koetter P."/>
            <person name="Koningstein G."/>
            <person name="Krogh S."/>
            <person name="Kumano M."/>
            <person name="Kurita K."/>
            <person name="Lapidus A."/>
            <person name="Lardinois S."/>
            <person name="Lauber J."/>
            <person name="Lazarevic V."/>
            <person name="Lee S.-M."/>
            <person name="Levine A."/>
            <person name="Liu H."/>
            <person name="Masuda S."/>
            <person name="Mauel C."/>
            <person name="Medigue C."/>
            <person name="Medina N."/>
            <person name="Mellado R.P."/>
            <person name="Mizuno M."/>
            <person name="Moestl D."/>
            <person name="Nakai S."/>
            <person name="Noback M."/>
            <person name="Noone D."/>
            <person name="O'Reilly M."/>
            <person name="Ogawa K."/>
            <person name="Ogiwara A."/>
            <person name="Oudega B."/>
            <person name="Park S.-H."/>
            <person name="Parro V."/>
            <person name="Pohl T.M."/>
            <person name="Portetelle D."/>
            <person name="Porwollik S."/>
            <person name="Prescott A.M."/>
            <person name="Presecan E."/>
            <person name="Pujic P."/>
            <person name="Purnelle B."/>
            <person name="Rapoport G."/>
            <person name="Rey M."/>
            <person name="Reynolds S."/>
            <person name="Rieger M."/>
            <person name="Rivolta C."/>
            <person name="Rocha E."/>
            <person name="Roche B."/>
            <person name="Rose M."/>
            <person name="Sadaie Y."/>
            <person name="Sato T."/>
            <person name="Scanlan E."/>
            <person name="Schleich S."/>
            <person name="Schroeter R."/>
            <person name="Scoffone F."/>
            <person name="Sekiguchi J."/>
            <person name="Sekowska A."/>
            <person name="Seror S.J."/>
            <person name="Serror P."/>
            <person name="Shin B.-S."/>
            <person name="Soldo B."/>
            <person name="Sorokin A."/>
            <person name="Tacconi E."/>
            <person name="Takagi T."/>
            <person name="Takahashi H."/>
            <person name="Takemaru K."/>
            <person name="Takeuchi M."/>
            <person name="Tamakoshi A."/>
            <person name="Tanaka T."/>
            <person name="Terpstra P."/>
            <person name="Tognoni A."/>
            <person name="Tosato V."/>
            <person name="Uchiyama S."/>
            <person name="Vandenbol M."/>
            <person name="Vannier F."/>
            <person name="Vassarotti A."/>
            <person name="Viari A."/>
            <person name="Wambutt R."/>
            <person name="Wedler E."/>
            <person name="Wedler H."/>
            <person name="Weitzenegger T."/>
            <person name="Winters P."/>
            <person name="Wipat A."/>
            <person name="Yamamoto H."/>
            <person name="Yamane K."/>
            <person name="Yasumoto K."/>
            <person name="Yata K."/>
            <person name="Yoshida K."/>
            <person name="Yoshikawa H.-F."/>
            <person name="Zumstein E."/>
            <person name="Yoshikawa H."/>
            <person name="Danchin A."/>
        </authorList>
    </citation>
    <scope>NUCLEOTIDE SEQUENCE [LARGE SCALE GENOMIC DNA]</scope>
    <source>
        <strain>168</strain>
    </source>
</reference>
<reference key="5">
    <citation type="journal article" date="2009" name="Microbiology">
        <title>From a consortium sequence to a unified sequence: the Bacillus subtilis 168 reference genome a decade later.</title>
        <authorList>
            <person name="Barbe V."/>
            <person name="Cruveiller S."/>
            <person name="Kunst F."/>
            <person name="Lenoble P."/>
            <person name="Meurice G."/>
            <person name="Sekowska A."/>
            <person name="Vallenet D."/>
            <person name="Wang T."/>
            <person name="Moszer I."/>
            <person name="Medigue C."/>
            <person name="Danchin A."/>
        </authorList>
    </citation>
    <scope>SEQUENCE REVISION TO 44-48</scope>
</reference>
<dbReference type="EC" id="2.7.13.3"/>
<dbReference type="EMBL" id="U63302">
    <property type="protein sequence ID" value="AAB61980.1"/>
    <property type="molecule type" value="Genomic_DNA"/>
</dbReference>
<dbReference type="EMBL" id="Z93933">
    <property type="protein sequence ID" value="CAB07911.1"/>
    <property type="molecule type" value="Genomic_DNA"/>
</dbReference>
<dbReference type="EMBL" id="AL009126">
    <property type="protein sequence ID" value="CAB15134.2"/>
    <property type="molecule type" value="Genomic_DNA"/>
</dbReference>
<dbReference type="PIR" id="S32935">
    <property type="entry name" value="S32935"/>
</dbReference>
<dbReference type="RefSeq" id="NP_391023.2">
    <property type="nucleotide sequence ID" value="NC_000964.3"/>
</dbReference>
<dbReference type="RefSeq" id="WP_003228853.1">
    <property type="nucleotide sequence ID" value="NZ_OZ025638.1"/>
</dbReference>
<dbReference type="SMR" id="Q08430"/>
<dbReference type="FunCoup" id="Q08430">
    <property type="interactions" value="152"/>
</dbReference>
<dbReference type="STRING" id="224308.BSU31450"/>
<dbReference type="jPOST" id="Q08430"/>
<dbReference type="PaxDb" id="224308-BSU31450"/>
<dbReference type="EnsemblBacteria" id="CAB15134">
    <property type="protein sequence ID" value="CAB15134"/>
    <property type="gene ID" value="BSU_31450"/>
</dbReference>
<dbReference type="GeneID" id="937167"/>
<dbReference type="KEGG" id="bsu:BSU31450"/>
<dbReference type="PATRIC" id="fig|224308.179.peg.3409"/>
<dbReference type="eggNOG" id="COG2205">
    <property type="taxonomic scope" value="Bacteria"/>
</dbReference>
<dbReference type="InParanoid" id="Q08430"/>
<dbReference type="OrthoDB" id="9815750at2"/>
<dbReference type="PhylomeDB" id="Q08430"/>
<dbReference type="BioCyc" id="BSUB:BSU31450-MONOMER"/>
<dbReference type="BRENDA" id="2.7.13.3">
    <property type="organism ID" value="658"/>
</dbReference>
<dbReference type="PRO" id="PR:Q08430"/>
<dbReference type="Proteomes" id="UP000001570">
    <property type="component" value="Chromosome"/>
</dbReference>
<dbReference type="GO" id="GO:0005886">
    <property type="term" value="C:plasma membrane"/>
    <property type="evidence" value="ECO:0007669"/>
    <property type="project" value="UniProtKB-SubCell"/>
</dbReference>
<dbReference type="GO" id="GO:0005524">
    <property type="term" value="F:ATP binding"/>
    <property type="evidence" value="ECO:0007669"/>
    <property type="project" value="UniProtKB-KW"/>
</dbReference>
<dbReference type="GO" id="GO:0000155">
    <property type="term" value="F:phosphorelay sensor kinase activity"/>
    <property type="evidence" value="ECO:0007669"/>
    <property type="project" value="InterPro"/>
</dbReference>
<dbReference type="GO" id="GO:0045881">
    <property type="term" value="P:positive regulation of sporulation resulting in formation of a cellular spore"/>
    <property type="evidence" value="ECO:0000316"/>
    <property type="project" value="CACAO"/>
</dbReference>
<dbReference type="GO" id="GO:0030435">
    <property type="term" value="P:sporulation resulting in formation of a cellular spore"/>
    <property type="evidence" value="ECO:0007669"/>
    <property type="project" value="UniProtKB-KW"/>
</dbReference>
<dbReference type="CDD" id="cd00082">
    <property type="entry name" value="HisKA"/>
    <property type="match status" value="1"/>
</dbReference>
<dbReference type="FunFam" id="1.10.287.130:FF:000032">
    <property type="entry name" value="Sensor histidine kinase"/>
    <property type="match status" value="1"/>
</dbReference>
<dbReference type="Gene3D" id="1.10.287.130">
    <property type="match status" value="1"/>
</dbReference>
<dbReference type="Gene3D" id="3.30.565.10">
    <property type="entry name" value="Histidine kinase-like ATPase, C-terminal domain"/>
    <property type="match status" value="1"/>
</dbReference>
<dbReference type="InterPro" id="IPR036890">
    <property type="entry name" value="HATPase_C_sf"/>
</dbReference>
<dbReference type="InterPro" id="IPR005467">
    <property type="entry name" value="His_kinase_dom"/>
</dbReference>
<dbReference type="InterPro" id="IPR003661">
    <property type="entry name" value="HisK_dim/P_dom"/>
</dbReference>
<dbReference type="InterPro" id="IPR036097">
    <property type="entry name" value="HisK_dim/P_sf"/>
</dbReference>
<dbReference type="InterPro" id="IPR004358">
    <property type="entry name" value="Sig_transdc_His_kin-like_C"/>
</dbReference>
<dbReference type="PANTHER" id="PTHR43065">
    <property type="entry name" value="SENSOR HISTIDINE KINASE"/>
    <property type="match status" value="1"/>
</dbReference>
<dbReference type="PANTHER" id="PTHR43065:SF53">
    <property type="entry name" value="SPORULATION KINASE B"/>
    <property type="match status" value="1"/>
</dbReference>
<dbReference type="Pfam" id="PF02518">
    <property type="entry name" value="HATPase_c"/>
    <property type="match status" value="1"/>
</dbReference>
<dbReference type="Pfam" id="PF00512">
    <property type="entry name" value="HisKA"/>
    <property type="match status" value="1"/>
</dbReference>
<dbReference type="PRINTS" id="PR00344">
    <property type="entry name" value="BCTRLSENSOR"/>
</dbReference>
<dbReference type="SMART" id="SM00387">
    <property type="entry name" value="HATPase_c"/>
    <property type="match status" value="1"/>
</dbReference>
<dbReference type="SMART" id="SM00388">
    <property type="entry name" value="HisKA"/>
    <property type="match status" value="1"/>
</dbReference>
<dbReference type="SUPFAM" id="SSF55874">
    <property type="entry name" value="ATPase domain of HSP90 chaperone/DNA topoisomerase II/histidine kinase"/>
    <property type="match status" value="1"/>
</dbReference>
<dbReference type="SUPFAM" id="SSF47384">
    <property type="entry name" value="Homodimeric domain of signal transducing histidine kinase"/>
    <property type="match status" value="1"/>
</dbReference>
<dbReference type="PROSITE" id="PS50109">
    <property type="entry name" value="HIS_KIN"/>
    <property type="match status" value="1"/>
</dbReference>